<keyword id="KW-0004">4Fe-4S</keyword>
<keyword id="KW-0028">Amino-acid biosynthesis</keyword>
<keyword id="KW-0100">Branched-chain amino acid biosynthesis</keyword>
<keyword id="KW-0408">Iron</keyword>
<keyword id="KW-0411">Iron-sulfur</keyword>
<keyword id="KW-0432">Leucine biosynthesis</keyword>
<keyword id="KW-0456">Lyase</keyword>
<keyword id="KW-0479">Metal-binding</keyword>
<evidence type="ECO:0000255" key="1">
    <source>
        <dbReference type="HAMAP-Rule" id="MF_01026"/>
    </source>
</evidence>
<name>LEUC_SHEB2</name>
<sequence length="468" mass="49807">MTNAKTLYQKVWDAHIVTAPEGEAPVIYVDRHLVHEVTSPQAFSGLKVAGRKLRAPEKTFATMDHNTSTRSASLDALSPMARTQVETLAQNCKDFGVRLYDIHHPNQGIVHVMGPELGITLPGTVIVCGDSHTATHGAFGALAFGIGTSEVEHVLATQTLRQLKAKTMKIEVRGHVTDGVTAKDIVLAIIGKIGMDGGTGYVVEFCGEAIEALSMEGRMTVCNMAIEMGAKAGMVAPDQTTFDYLAGREFAPKGEDWTEAVAYWKAIKTDDGAVFDAVVELDAADIAPQLTWGTNPGQVVAIDGKVPDPINEANPSTRASMEKALEYIGLSAGTPMTDISINKVFIGSCTNSRIEDLRSAAVHAKGRKVASGVTAIVVPGSGQVKAQAEAEGLDKIFIEAGFEWRLPGCSMCLAMNDDRLEAGDRCASTSNRNFEGRQGRGSRTHLVSPAMAAAAAVAGHFVDIRKPY</sequence>
<accession>B8E4K6</accession>
<gene>
    <name evidence="1" type="primary">leuC</name>
    <name type="ordered locus">Sbal223_0413</name>
</gene>
<proteinExistence type="inferred from homology"/>
<feature type="chain" id="PRO_1000149373" description="3-isopropylmalate dehydratase large subunit">
    <location>
        <begin position="1"/>
        <end position="468"/>
    </location>
</feature>
<feature type="binding site" evidence="1">
    <location>
        <position position="349"/>
    </location>
    <ligand>
        <name>[4Fe-4S] cluster</name>
        <dbReference type="ChEBI" id="CHEBI:49883"/>
    </ligand>
</feature>
<feature type="binding site" evidence="1">
    <location>
        <position position="409"/>
    </location>
    <ligand>
        <name>[4Fe-4S] cluster</name>
        <dbReference type="ChEBI" id="CHEBI:49883"/>
    </ligand>
</feature>
<feature type="binding site" evidence="1">
    <location>
        <position position="412"/>
    </location>
    <ligand>
        <name>[4Fe-4S] cluster</name>
        <dbReference type="ChEBI" id="CHEBI:49883"/>
    </ligand>
</feature>
<protein>
    <recommendedName>
        <fullName evidence="1">3-isopropylmalate dehydratase large subunit</fullName>
        <ecNumber evidence="1">4.2.1.33</ecNumber>
    </recommendedName>
    <alternativeName>
        <fullName evidence="1">Alpha-IPM isomerase</fullName>
        <shortName evidence="1">IPMI</shortName>
    </alternativeName>
    <alternativeName>
        <fullName evidence="1">Isopropylmalate isomerase</fullName>
    </alternativeName>
</protein>
<reference key="1">
    <citation type="submission" date="2008-12" db="EMBL/GenBank/DDBJ databases">
        <title>Complete sequence of chromosome of Shewanella baltica OS223.</title>
        <authorList>
            <consortium name="US DOE Joint Genome Institute"/>
            <person name="Lucas S."/>
            <person name="Copeland A."/>
            <person name="Lapidus A."/>
            <person name="Glavina del Rio T."/>
            <person name="Dalin E."/>
            <person name="Tice H."/>
            <person name="Bruce D."/>
            <person name="Goodwin L."/>
            <person name="Pitluck S."/>
            <person name="Chertkov O."/>
            <person name="Meincke L."/>
            <person name="Brettin T."/>
            <person name="Detter J.C."/>
            <person name="Han C."/>
            <person name="Kuske C.R."/>
            <person name="Larimer F."/>
            <person name="Land M."/>
            <person name="Hauser L."/>
            <person name="Kyrpides N."/>
            <person name="Ovchinnikova G."/>
            <person name="Brettar I."/>
            <person name="Rodrigues J."/>
            <person name="Konstantinidis K."/>
            <person name="Tiedje J."/>
        </authorList>
    </citation>
    <scope>NUCLEOTIDE SEQUENCE [LARGE SCALE GENOMIC DNA]</scope>
    <source>
        <strain>OS223</strain>
    </source>
</reference>
<organism>
    <name type="scientific">Shewanella baltica (strain OS223)</name>
    <dbReference type="NCBI Taxonomy" id="407976"/>
    <lineage>
        <taxon>Bacteria</taxon>
        <taxon>Pseudomonadati</taxon>
        <taxon>Pseudomonadota</taxon>
        <taxon>Gammaproteobacteria</taxon>
        <taxon>Alteromonadales</taxon>
        <taxon>Shewanellaceae</taxon>
        <taxon>Shewanella</taxon>
    </lineage>
</organism>
<dbReference type="EC" id="4.2.1.33" evidence="1"/>
<dbReference type="EMBL" id="CP001252">
    <property type="protein sequence ID" value="ACK44947.1"/>
    <property type="molecule type" value="Genomic_DNA"/>
</dbReference>
<dbReference type="RefSeq" id="WP_012586602.1">
    <property type="nucleotide sequence ID" value="NC_011663.1"/>
</dbReference>
<dbReference type="SMR" id="B8E4K6"/>
<dbReference type="KEGG" id="sbp:Sbal223_0413"/>
<dbReference type="HOGENOM" id="CLU_006714_3_4_6"/>
<dbReference type="UniPathway" id="UPA00048">
    <property type="reaction ID" value="UER00071"/>
</dbReference>
<dbReference type="Proteomes" id="UP000002507">
    <property type="component" value="Chromosome"/>
</dbReference>
<dbReference type="GO" id="GO:0003861">
    <property type="term" value="F:3-isopropylmalate dehydratase activity"/>
    <property type="evidence" value="ECO:0007669"/>
    <property type="project" value="UniProtKB-UniRule"/>
</dbReference>
<dbReference type="GO" id="GO:0051539">
    <property type="term" value="F:4 iron, 4 sulfur cluster binding"/>
    <property type="evidence" value="ECO:0007669"/>
    <property type="project" value="UniProtKB-KW"/>
</dbReference>
<dbReference type="GO" id="GO:0046872">
    <property type="term" value="F:metal ion binding"/>
    <property type="evidence" value="ECO:0007669"/>
    <property type="project" value="UniProtKB-KW"/>
</dbReference>
<dbReference type="GO" id="GO:0009098">
    <property type="term" value="P:L-leucine biosynthetic process"/>
    <property type="evidence" value="ECO:0007669"/>
    <property type="project" value="UniProtKB-UniRule"/>
</dbReference>
<dbReference type="CDD" id="cd01583">
    <property type="entry name" value="IPMI"/>
    <property type="match status" value="1"/>
</dbReference>
<dbReference type="FunFam" id="3.30.499.10:FF:000006">
    <property type="entry name" value="3-isopropylmalate dehydratase large subunit"/>
    <property type="match status" value="1"/>
</dbReference>
<dbReference type="FunFam" id="3.30.499.10:FF:000007">
    <property type="entry name" value="3-isopropylmalate dehydratase large subunit"/>
    <property type="match status" value="1"/>
</dbReference>
<dbReference type="Gene3D" id="3.30.499.10">
    <property type="entry name" value="Aconitase, domain 3"/>
    <property type="match status" value="2"/>
</dbReference>
<dbReference type="HAMAP" id="MF_01026">
    <property type="entry name" value="LeuC_type1"/>
    <property type="match status" value="1"/>
</dbReference>
<dbReference type="InterPro" id="IPR004430">
    <property type="entry name" value="3-IsopropMal_deHydase_lsu"/>
</dbReference>
<dbReference type="InterPro" id="IPR015931">
    <property type="entry name" value="Acnase/IPM_dHydase_lsu_aba_1/3"/>
</dbReference>
<dbReference type="InterPro" id="IPR001030">
    <property type="entry name" value="Acoase/IPM_deHydtase_lsu_aba"/>
</dbReference>
<dbReference type="InterPro" id="IPR018136">
    <property type="entry name" value="Aconitase_4Fe-4S_BS"/>
</dbReference>
<dbReference type="InterPro" id="IPR036008">
    <property type="entry name" value="Aconitase_4Fe-4S_dom"/>
</dbReference>
<dbReference type="InterPro" id="IPR050067">
    <property type="entry name" value="IPM_dehydratase_rel_enz"/>
</dbReference>
<dbReference type="InterPro" id="IPR033941">
    <property type="entry name" value="IPMI_cat"/>
</dbReference>
<dbReference type="NCBIfam" id="TIGR00170">
    <property type="entry name" value="leuC"/>
    <property type="match status" value="1"/>
</dbReference>
<dbReference type="NCBIfam" id="NF004016">
    <property type="entry name" value="PRK05478.1"/>
    <property type="match status" value="1"/>
</dbReference>
<dbReference type="NCBIfam" id="NF009116">
    <property type="entry name" value="PRK12466.1"/>
    <property type="match status" value="1"/>
</dbReference>
<dbReference type="PANTHER" id="PTHR43822:SF9">
    <property type="entry name" value="3-ISOPROPYLMALATE DEHYDRATASE"/>
    <property type="match status" value="1"/>
</dbReference>
<dbReference type="PANTHER" id="PTHR43822">
    <property type="entry name" value="HOMOACONITASE, MITOCHONDRIAL-RELATED"/>
    <property type="match status" value="1"/>
</dbReference>
<dbReference type="Pfam" id="PF00330">
    <property type="entry name" value="Aconitase"/>
    <property type="match status" value="1"/>
</dbReference>
<dbReference type="PRINTS" id="PR00415">
    <property type="entry name" value="ACONITASE"/>
</dbReference>
<dbReference type="SUPFAM" id="SSF53732">
    <property type="entry name" value="Aconitase iron-sulfur domain"/>
    <property type="match status" value="1"/>
</dbReference>
<dbReference type="PROSITE" id="PS00450">
    <property type="entry name" value="ACONITASE_1"/>
    <property type="match status" value="1"/>
</dbReference>
<dbReference type="PROSITE" id="PS01244">
    <property type="entry name" value="ACONITASE_2"/>
    <property type="match status" value="1"/>
</dbReference>
<comment type="function">
    <text evidence="1">Catalyzes the isomerization between 2-isopropylmalate and 3-isopropylmalate, via the formation of 2-isopropylmaleate.</text>
</comment>
<comment type="catalytic activity">
    <reaction evidence="1">
        <text>(2R,3S)-3-isopropylmalate = (2S)-2-isopropylmalate</text>
        <dbReference type="Rhea" id="RHEA:32287"/>
        <dbReference type="ChEBI" id="CHEBI:1178"/>
        <dbReference type="ChEBI" id="CHEBI:35121"/>
        <dbReference type="EC" id="4.2.1.33"/>
    </reaction>
</comment>
<comment type="cofactor">
    <cofactor evidence="1">
        <name>[4Fe-4S] cluster</name>
        <dbReference type="ChEBI" id="CHEBI:49883"/>
    </cofactor>
    <text evidence="1">Binds 1 [4Fe-4S] cluster per subunit.</text>
</comment>
<comment type="pathway">
    <text evidence="1">Amino-acid biosynthesis; L-leucine biosynthesis; L-leucine from 3-methyl-2-oxobutanoate: step 2/4.</text>
</comment>
<comment type="subunit">
    <text evidence="1">Heterodimer of LeuC and LeuD.</text>
</comment>
<comment type="similarity">
    <text evidence="1">Belongs to the aconitase/IPM isomerase family. LeuC type 1 subfamily.</text>
</comment>